<accession>B2SQS8</accession>
<sequence>MAKDTNKTVKVRLVRGLRGTQSRHRLSVRALGLNKLNDVRELKDSPQVRGLINTVHYLVKVEE</sequence>
<feature type="chain" id="PRO_0000347156" description="Large ribosomal subunit protein uL30">
    <location>
        <begin position="1"/>
        <end position="63"/>
    </location>
</feature>
<reference key="1">
    <citation type="journal article" date="2008" name="BMC Genomics">
        <title>Genome sequence and rapid evolution of the rice pathogen Xanthomonas oryzae pv. oryzae PXO99A.</title>
        <authorList>
            <person name="Salzberg S.L."/>
            <person name="Sommer D.D."/>
            <person name="Schatz M.C."/>
            <person name="Phillippy A.M."/>
            <person name="Rabinowicz P.D."/>
            <person name="Tsuge S."/>
            <person name="Furutani A."/>
            <person name="Ochiai H."/>
            <person name="Delcher A.L."/>
            <person name="Kelley D."/>
            <person name="Madupu R."/>
            <person name="Puiu D."/>
            <person name="Radune D."/>
            <person name="Shumway M."/>
            <person name="Trapnell C."/>
            <person name="Aparna G."/>
            <person name="Jha G."/>
            <person name="Pandey A."/>
            <person name="Patil P.B."/>
            <person name="Ishihara H."/>
            <person name="Meyer D.F."/>
            <person name="Szurek B."/>
            <person name="Verdier V."/>
            <person name="Koebnik R."/>
            <person name="Dow J.M."/>
            <person name="Ryan R.P."/>
            <person name="Hirata H."/>
            <person name="Tsuyumu S."/>
            <person name="Won Lee S."/>
            <person name="Seo Y.-S."/>
            <person name="Sriariyanum M."/>
            <person name="Ronald P.C."/>
            <person name="Sonti R.V."/>
            <person name="Van Sluys M.-A."/>
            <person name="Leach J.E."/>
            <person name="White F.F."/>
            <person name="Bogdanove A.J."/>
        </authorList>
    </citation>
    <scope>NUCLEOTIDE SEQUENCE [LARGE SCALE GENOMIC DNA]</scope>
    <source>
        <strain>PXO99A</strain>
    </source>
</reference>
<protein>
    <recommendedName>
        <fullName evidence="1">Large ribosomal subunit protein uL30</fullName>
    </recommendedName>
    <alternativeName>
        <fullName evidence="2">50S ribosomal protein L30</fullName>
    </alternativeName>
</protein>
<name>RL30_XANOP</name>
<keyword id="KW-0687">Ribonucleoprotein</keyword>
<keyword id="KW-0689">Ribosomal protein</keyword>
<comment type="subunit">
    <text evidence="1">Part of the 50S ribosomal subunit.</text>
</comment>
<comment type="similarity">
    <text evidence="1">Belongs to the universal ribosomal protein uL30 family.</text>
</comment>
<gene>
    <name evidence="1" type="primary">rpmD</name>
    <name type="ordered locus">PXO_04502</name>
</gene>
<dbReference type="EMBL" id="CP000967">
    <property type="protein sequence ID" value="ACD57905.1"/>
    <property type="molecule type" value="Genomic_DNA"/>
</dbReference>
<dbReference type="RefSeq" id="WP_003486678.1">
    <property type="nucleotide sequence ID" value="NC_010717.2"/>
</dbReference>
<dbReference type="SMR" id="B2SQS8"/>
<dbReference type="GeneID" id="97509354"/>
<dbReference type="KEGG" id="xop:PXO_04502"/>
<dbReference type="eggNOG" id="COG1841">
    <property type="taxonomic scope" value="Bacteria"/>
</dbReference>
<dbReference type="HOGENOM" id="CLU_131047_1_4_6"/>
<dbReference type="Proteomes" id="UP000001740">
    <property type="component" value="Chromosome"/>
</dbReference>
<dbReference type="GO" id="GO:0022625">
    <property type="term" value="C:cytosolic large ribosomal subunit"/>
    <property type="evidence" value="ECO:0007669"/>
    <property type="project" value="TreeGrafter"/>
</dbReference>
<dbReference type="GO" id="GO:0003735">
    <property type="term" value="F:structural constituent of ribosome"/>
    <property type="evidence" value="ECO:0007669"/>
    <property type="project" value="InterPro"/>
</dbReference>
<dbReference type="GO" id="GO:0006412">
    <property type="term" value="P:translation"/>
    <property type="evidence" value="ECO:0007669"/>
    <property type="project" value="UniProtKB-UniRule"/>
</dbReference>
<dbReference type="CDD" id="cd00355">
    <property type="entry name" value="Ribosomal_L30_like"/>
    <property type="match status" value="1"/>
</dbReference>
<dbReference type="FunFam" id="3.30.1390.20:FF:000006">
    <property type="entry name" value="50S ribosomal protein L30"/>
    <property type="match status" value="1"/>
</dbReference>
<dbReference type="Gene3D" id="3.30.1390.20">
    <property type="entry name" value="Ribosomal protein L30, ferredoxin-like fold domain"/>
    <property type="match status" value="1"/>
</dbReference>
<dbReference type="HAMAP" id="MF_01371_B">
    <property type="entry name" value="Ribosomal_uL30_B"/>
    <property type="match status" value="1"/>
</dbReference>
<dbReference type="InterPro" id="IPR036919">
    <property type="entry name" value="Ribo_uL30_ferredoxin-like_sf"/>
</dbReference>
<dbReference type="InterPro" id="IPR005996">
    <property type="entry name" value="Ribosomal_uL30_bac-type"/>
</dbReference>
<dbReference type="InterPro" id="IPR016082">
    <property type="entry name" value="Ribosomal_uL30_ferredoxin-like"/>
</dbReference>
<dbReference type="NCBIfam" id="TIGR01308">
    <property type="entry name" value="rpmD_bact"/>
    <property type="match status" value="1"/>
</dbReference>
<dbReference type="PANTHER" id="PTHR15892:SF2">
    <property type="entry name" value="LARGE RIBOSOMAL SUBUNIT PROTEIN UL30M"/>
    <property type="match status" value="1"/>
</dbReference>
<dbReference type="PANTHER" id="PTHR15892">
    <property type="entry name" value="MITOCHONDRIAL RIBOSOMAL PROTEIN L30"/>
    <property type="match status" value="1"/>
</dbReference>
<dbReference type="Pfam" id="PF00327">
    <property type="entry name" value="Ribosomal_L30"/>
    <property type="match status" value="1"/>
</dbReference>
<dbReference type="PIRSF" id="PIRSF002211">
    <property type="entry name" value="Ribosomal_L30_bac-type"/>
    <property type="match status" value="1"/>
</dbReference>
<dbReference type="SUPFAM" id="SSF55129">
    <property type="entry name" value="Ribosomal protein L30p/L7e"/>
    <property type="match status" value="1"/>
</dbReference>
<organism>
    <name type="scientific">Xanthomonas oryzae pv. oryzae (strain PXO99A)</name>
    <dbReference type="NCBI Taxonomy" id="360094"/>
    <lineage>
        <taxon>Bacteria</taxon>
        <taxon>Pseudomonadati</taxon>
        <taxon>Pseudomonadota</taxon>
        <taxon>Gammaproteobacteria</taxon>
        <taxon>Lysobacterales</taxon>
        <taxon>Lysobacteraceae</taxon>
        <taxon>Xanthomonas</taxon>
    </lineage>
</organism>
<evidence type="ECO:0000255" key="1">
    <source>
        <dbReference type="HAMAP-Rule" id="MF_01371"/>
    </source>
</evidence>
<evidence type="ECO:0000305" key="2"/>
<proteinExistence type="inferred from homology"/>